<protein>
    <recommendedName>
        <fullName>Acylphosphatase-2</fullName>
        <ecNumber>3.6.1.7</ecNumber>
    </recommendedName>
    <alternativeName>
        <fullName>Acylphosphatase, muscle type isozyme</fullName>
    </alternativeName>
    <alternativeName>
        <fullName>Acylphosphate phosphohydrolase 2</fullName>
    </alternativeName>
</protein>
<proteinExistence type="evidence at protein level"/>
<evidence type="ECO:0000250" key="1">
    <source>
        <dbReference type="UniProtKB" id="P35745"/>
    </source>
</evidence>
<evidence type="ECO:0000255" key="2">
    <source>
        <dbReference type="PROSITE-ProRule" id="PRU00520"/>
    </source>
</evidence>
<evidence type="ECO:0000269" key="3">
    <source>
    </source>
</evidence>
<evidence type="ECO:0000305" key="4"/>
<evidence type="ECO:0007744" key="5">
    <source>
    </source>
</evidence>
<keyword id="KW-0007">Acetylation</keyword>
<keyword id="KW-0903">Direct protein sequencing</keyword>
<keyword id="KW-0378">Hydrolase</keyword>
<keyword id="KW-0597">Phosphoprotein</keyword>
<keyword id="KW-1267">Proteomics identification</keyword>
<keyword id="KW-1185">Reference proteome</keyword>
<accession>P14621</accession>
<reference key="1">
    <citation type="journal article" date="2004" name="Genome Res.">
        <title>The status, quality, and expansion of the NIH full-length cDNA project: the Mammalian Gene Collection (MGC).</title>
        <authorList>
            <consortium name="The MGC Project Team"/>
        </authorList>
    </citation>
    <scope>NUCLEOTIDE SEQUENCE [LARGE SCALE MRNA]</scope>
    <source>
        <tissue>Ovary</tissue>
    </source>
</reference>
<reference key="2">
    <citation type="journal article" date="1984" name="Mol. Biol. Med.">
        <title>Human skeletal muscle acylphosphatase: the primary structure.</title>
        <authorList>
            <person name="Manao G."/>
            <person name="Camici G."/>
            <person name="Modesti A."/>
            <person name="Liguri G."/>
            <person name="Berti A."/>
            <person name="Setfani M."/>
            <person name="Cappugi G."/>
            <person name="Ramponi G."/>
        </authorList>
    </citation>
    <scope>PROTEIN SEQUENCE OF 2-99</scope>
    <source>
        <tissue>Muscle</tissue>
    </source>
</reference>
<reference key="3">
    <citation type="journal article" date="1995" name="FEBS Lett.">
        <title>Cloning and expression of the cDNA coding for the erythrocyte isoenzyme of human acylphosphatase.</title>
        <authorList>
            <person name="Fiaschi T."/>
            <person name="Raugei G."/>
            <person name="Marzocchini R."/>
            <person name="Chiarugi P."/>
            <person name="Cirri P."/>
            <person name="Ramponi G."/>
        </authorList>
    </citation>
    <scope>NUCLEOTIDE SEQUENCE [MRNA] OF 22-99</scope>
    <source>
        <tissue>Heart</tissue>
    </source>
</reference>
<reference key="4">
    <citation type="journal article" date="2011" name="BMC Syst. Biol.">
        <title>Initial characterization of the human central proteome.</title>
        <authorList>
            <person name="Burkard T.R."/>
            <person name="Planyavsky M."/>
            <person name="Kaupe I."/>
            <person name="Breitwieser F.P."/>
            <person name="Buerckstuemmer T."/>
            <person name="Bennett K.L."/>
            <person name="Superti-Furga G."/>
            <person name="Colinge J."/>
        </authorList>
    </citation>
    <scope>IDENTIFICATION BY MASS SPECTROMETRY [LARGE SCALE ANALYSIS]</scope>
</reference>
<reference key="5">
    <citation type="journal article" date="2012" name="Proc. Natl. Acad. Sci. U.S.A.">
        <title>N-terminal acetylome analyses and functional insights of the N-terminal acetyltransferase NatB.</title>
        <authorList>
            <person name="Van Damme P."/>
            <person name="Lasa M."/>
            <person name="Polevoda B."/>
            <person name="Gazquez C."/>
            <person name="Elosegui-Artola A."/>
            <person name="Kim D.S."/>
            <person name="De Juan-Pardo E."/>
            <person name="Demeyer K."/>
            <person name="Hole K."/>
            <person name="Larrea E."/>
            <person name="Timmerman E."/>
            <person name="Prieto J."/>
            <person name="Arnesen T."/>
            <person name="Sherman F."/>
            <person name="Gevaert K."/>
            <person name="Aldabe R."/>
        </authorList>
    </citation>
    <scope>ACETYLATION [LARGE SCALE ANALYSIS] AT SER-2</scope>
    <scope>CLEAVAGE OF INITIATOR METHIONINE [LARGE SCALE ANALYSIS]</scope>
    <scope>IDENTIFICATION BY MASS SPECTROMETRY [LARGE SCALE ANALYSIS]</scope>
</reference>
<reference key="6">
    <citation type="journal article" date="2014" name="J. Proteomics">
        <title>An enzyme assisted RP-RPLC approach for in-depth analysis of human liver phosphoproteome.</title>
        <authorList>
            <person name="Bian Y."/>
            <person name="Song C."/>
            <person name="Cheng K."/>
            <person name="Dong M."/>
            <person name="Wang F."/>
            <person name="Huang J."/>
            <person name="Sun D."/>
            <person name="Wang L."/>
            <person name="Ye M."/>
            <person name="Zou H."/>
        </authorList>
    </citation>
    <scope>IDENTIFICATION BY MASS SPECTROMETRY [LARGE SCALE ANALYSIS]</scope>
    <source>
        <tissue>Liver</tissue>
    </source>
</reference>
<name>ACYP2_HUMAN</name>
<dbReference type="EC" id="3.6.1.7"/>
<dbReference type="EMBL" id="BC012290">
    <property type="protein sequence ID" value="AAH12290.1"/>
    <property type="molecule type" value="mRNA"/>
</dbReference>
<dbReference type="EMBL" id="X84195">
    <property type="protein sequence ID" value="CAA58988.1"/>
    <property type="molecule type" value="mRNA"/>
</dbReference>
<dbReference type="CCDS" id="CCDS1850.1"/>
<dbReference type="PIR" id="S59138">
    <property type="entry name" value="S52327"/>
</dbReference>
<dbReference type="RefSeq" id="NP_612457.1">
    <property type="nucleotide sequence ID" value="NM_138448.4"/>
</dbReference>
<dbReference type="BMRB" id="P14621"/>
<dbReference type="SMR" id="P14621"/>
<dbReference type="BioGRID" id="106613">
    <property type="interactions" value="15"/>
</dbReference>
<dbReference type="DIP" id="DIP-48449N"/>
<dbReference type="FunCoup" id="P14621">
    <property type="interactions" value="98"/>
</dbReference>
<dbReference type="IntAct" id="P14621">
    <property type="interactions" value="7"/>
</dbReference>
<dbReference type="STRING" id="9606.ENSP00000475986"/>
<dbReference type="DrugBank" id="DB01942">
    <property type="generic name" value="Formic acid"/>
</dbReference>
<dbReference type="GlyGen" id="P14621">
    <property type="glycosylation" value="2 sites, 2 N-linked glycans (2 sites)"/>
</dbReference>
<dbReference type="iPTMnet" id="P14621"/>
<dbReference type="PhosphoSitePlus" id="P14621"/>
<dbReference type="BioMuta" id="ACYP2"/>
<dbReference type="jPOST" id="P14621"/>
<dbReference type="MassIVE" id="P14621"/>
<dbReference type="PaxDb" id="9606-ENSP00000378161"/>
<dbReference type="PeptideAtlas" id="P14621"/>
<dbReference type="ProteomicsDB" id="53066"/>
<dbReference type="Pumba" id="P14621"/>
<dbReference type="Antibodypedia" id="30250">
    <property type="antibodies" value="109 antibodies from 22 providers"/>
</dbReference>
<dbReference type="DNASU" id="98"/>
<dbReference type="Ensembl" id="ENST00000394666.9">
    <property type="protein sequence ID" value="ENSP00000378161.3"/>
    <property type="gene ID" value="ENSG00000170634.13"/>
</dbReference>
<dbReference type="GeneID" id="98"/>
<dbReference type="KEGG" id="hsa:98"/>
<dbReference type="MANE-Select" id="ENST00000394666.9">
    <property type="protein sequence ID" value="ENSP00000378161.3"/>
    <property type="RefSeq nucleotide sequence ID" value="NM_138448.4"/>
    <property type="RefSeq protein sequence ID" value="NP_612457.1"/>
</dbReference>
<dbReference type="UCSC" id="uc002rxq.5">
    <property type="organism name" value="human"/>
</dbReference>
<dbReference type="AGR" id="HGNC:180"/>
<dbReference type="CTD" id="98"/>
<dbReference type="DisGeNET" id="98"/>
<dbReference type="GeneCards" id="ACYP2"/>
<dbReference type="HGNC" id="HGNC:180">
    <property type="gene designation" value="ACYP2"/>
</dbReference>
<dbReference type="HPA" id="ENSG00000170634">
    <property type="expression patterns" value="Tissue enhanced (brain, skeletal muscle, tongue)"/>
</dbReference>
<dbReference type="MalaCards" id="ACYP2"/>
<dbReference type="MIM" id="102595">
    <property type="type" value="gene"/>
</dbReference>
<dbReference type="neXtProt" id="NX_P14621"/>
<dbReference type="OpenTargets" id="ENSG00000170634"/>
<dbReference type="PharmGKB" id="PA24500"/>
<dbReference type="VEuPathDB" id="HostDB:ENSG00000170634"/>
<dbReference type="eggNOG" id="KOG3360">
    <property type="taxonomic scope" value="Eukaryota"/>
</dbReference>
<dbReference type="GeneTree" id="ENSGT00390000011103"/>
<dbReference type="HOGENOM" id="CLU_141932_0_1_1"/>
<dbReference type="InParanoid" id="P14621"/>
<dbReference type="OMA" id="HAIMAEN"/>
<dbReference type="OrthoDB" id="7961613at2759"/>
<dbReference type="PAN-GO" id="P14621">
    <property type="GO annotations" value="1 GO annotation based on evolutionary models"/>
</dbReference>
<dbReference type="PhylomeDB" id="P14621"/>
<dbReference type="TreeFam" id="TF300288"/>
<dbReference type="BRENDA" id="3.6.1.7">
    <property type="organism ID" value="2681"/>
</dbReference>
<dbReference type="PathwayCommons" id="P14621"/>
<dbReference type="SABIO-RK" id="P14621"/>
<dbReference type="SignaLink" id="P14621"/>
<dbReference type="BioGRID-ORCS" id="98">
    <property type="hits" value="14 hits in 1161 CRISPR screens"/>
</dbReference>
<dbReference type="CD-CODE" id="FB4E32DD">
    <property type="entry name" value="Presynaptic clusters and postsynaptic densities"/>
</dbReference>
<dbReference type="ChiTaRS" id="ACYP2">
    <property type="organism name" value="human"/>
</dbReference>
<dbReference type="GeneWiki" id="ACYP2"/>
<dbReference type="GenomeRNAi" id="98"/>
<dbReference type="Pharos" id="P14621">
    <property type="development level" value="Tbio"/>
</dbReference>
<dbReference type="PRO" id="PR:P14621"/>
<dbReference type="Proteomes" id="UP000005640">
    <property type="component" value="Chromosome 2"/>
</dbReference>
<dbReference type="RNAct" id="P14621">
    <property type="molecule type" value="protein"/>
</dbReference>
<dbReference type="Bgee" id="ENSG00000170634">
    <property type="expression patterns" value="Expressed in pons and 200 other cell types or tissues"/>
</dbReference>
<dbReference type="ExpressionAtlas" id="P14621">
    <property type="expression patterns" value="baseline and differential"/>
</dbReference>
<dbReference type="GO" id="GO:0005739">
    <property type="term" value="C:mitochondrion"/>
    <property type="evidence" value="ECO:0006056"/>
    <property type="project" value="FlyBase"/>
</dbReference>
<dbReference type="GO" id="GO:0003998">
    <property type="term" value="F:acylphosphatase activity"/>
    <property type="evidence" value="ECO:0000318"/>
    <property type="project" value="GO_Central"/>
</dbReference>
<dbReference type="GO" id="GO:0042802">
    <property type="term" value="F:identical protein binding"/>
    <property type="evidence" value="ECO:0000353"/>
    <property type="project" value="IntAct"/>
</dbReference>
<dbReference type="GO" id="GO:0006796">
    <property type="term" value="P:phosphate-containing compound metabolic process"/>
    <property type="evidence" value="ECO:0000304"/>
    <property type="project" value="ProtInc"/>
</dbReference>
<dbReference type="FunFam" id="3.30.70.100:FF:000011">
    <property type="entry name" value="Acylphosphatase"/>
    <property type="match status" value="1"/>
</dbReference>
<dbReference type="Gene3D" id="3.30.70.100">
    <property type="match status" value="1"/>
</dbReference>
<dbReference type="InterPro" id="IPR020456">
    <property type="entry name" value="Acylphosphatase"/>
</dbReference>
<dbReference type="InterPro" id="IPR001792">
    <property type="entry name" value="Acylphosphatase-like_dom"/>
</dbReference>
<dbReference type="InterPro" id="IPR036046">
    <property type="entry name" value="Acylphosphatase-like_dom_sf"/>
</dbReference>
<dbReference type="InterPro" id="IPR017968">
    <property type="entry name" value="Acylphosphatase_CS"/>
</dbReference>
<dbReference type="PANTHER" id="PTHR10029">
    <property type="entry name" value="ACYLPHOSPHATASE"/>
    <property type="match status" value="1"/>
</dbReference>
<dbReference type="PANTHER" id="PTHR10029:SF20">
    <property type="entry name" value="ACYLPHOSPHATASE-2"/>
    <property type="match status" value="1"/>
</dbReference>
<dbReference type="Pfam" id="PF00708">
    <property type="entry name" value="Acylphosphatase"/>
    <property type="match status" value="1"/>
</dbReference>
<dbReference type="PRINTS" id="PR00112">
    <property type="entry name" value="ACYLPHPHTASE"/>
</dbReference>
<dbReference type="SUPFAM" id="SSF54975">
    <property type="entry name" value="Acylphosphatase/BLUF domain-like"/>
    <property type="match status" value="1"/>
</dbReference>
<dbReference type="PROSITE" id="PS00150">
    <property type="entry name" value="ACYLPHOSPHATASE_1"/>
    <property type="match status" value="1"/>
</dbReference>
<dbReference type="PROSITE" id="PS00151">
    <property type="entry name" value="ACYLPHOSPHATASE_2"/>
    <property type="match status" value="1"/>
</dbReference>
<dbReference type="PROSITE" id="PS51160">
    <property type="entry name" value="ACYLPHOSPHATASE_3"/>
    <property type="match status" value="1"/>
</dbReference>
<gene>
    <name type="primary">ACYP2</name>
    <name type="synonym">ACYP</name>
</gene>
<comment type="function">
    <text>Its physiological role is not yet clear.</text>
</comment>
<comment type="catalytic activity">
    <reaction>
        <text>an acyl phosphate + H2O = a carboxylate + phosphate + H(+)</text>
        <dbReference type="Rhea" id="RHEA:14965"/>
        <dbReference type="ChEBI" id="CHEBI:15377"/>
        <dbReference type="ChEBI" id="CHEBI:15378"/>
        <dbReference type="ChEBI" id="CHEBI:29067"/>
        <dbReference type="ChEBI" id="CHEBI:43474"/>
        <dbReference type="ChEBI" id="CHEBI:59918"/>
        <dbReference type="EC" id="3.6.1.7"/>
    </reaction>
</comment>
<comment type="interaction">
    <interactant intactId="EBI-10198377">
        <id>P14621</id>
    </interactant>
    <interactant intactId="EBI-10198377">
        <id>P14621</id>
        <label>ACYP2</label>
    </interactant>
    <organismsDiffer>false</organismsDiffer>
    <experiments>3</experiments>
</comment>
<comment type="interaction">
    <interactant intactId="EBI-10198377">
        <id>P14621</id>
    </interactant>
    <interactant intactId="EBI-632965">
        <id>Q9NS37</id>
        <label>CREBZF</label>
    </interactant>
    <organismsDiffer>false</organismsDiffer>
    <experiments>3</experiments>
</comment>
<comment type="interaction">
    <interactant intactId="EBI-10198377">
        <id>P14621</id>
    </interactant>
    <interactant intactId="EBI-749441">
        <id>O00204</id>
        <label>SULT2B1</label>
    </interactant>
    <organismsDiffer>false</organismsDiffer>
    <experiments>3</experiments>
</comment>
<comment type="similarity">
    <text evidence="4">Belongs to the acylphosphatase family.</text>
</comment>
<organism>
    <name type="scientific">Homo sapiens</name>
    <name type="common">Human</name>
    <dbReference type="NCBI Taxonomy" id="9606"/>
    <lineage>
        <taxon>Eukaryota</taxon>
        <taxon>Metazoa</taxon>
        <taxon>Chordata</taxon>
        <taxon>Craniata</taxon>
        <taxon>Vertebrata</taxon>
        <taxon>Euteleostomi</taxon>
        <taxon>Mammalia</taxon>
        <taxon>Eutheria</taxon>
        <taxon>Euarchontoglires</taxon>
        <taxon>Primates</taxon>
        <taxon>Haplorrhini</taxon>
        <taxon>Catarrhini</taxon>
        <taxon>Hominidae</taxon>
        <taxon>Homo</taxon>
    </lineage>
</organism>
<sequence length="99" mass="11140">MSTAQSLKSVDYEVFGRVQGVCFRMYTEDEARKIGVVGWVKNTSKGTVTGQVQGPEDKVNSMKSWLSKVGSPSSRIDRTNFSNEKTISKLEYSNFSIRY</sequence>
<feature type="initiator methionine" description="Removed" evidence="3 5">
    <location>
        <position position="1"/>
    </location>
</feature>
<feature type="chain" id="PRO_0000158542" description="Acylphosphatase-2">
    <location>
        <begin position="2"/>
        <end position="99"/>
    </location>
</feature>
<feature type="domain" description="Acylphosphatase-like" evidence="2">
    <location>
        <begin position="9"/>
        <end position="99"/>
    </location>
</feature>
<feature type="active site" evidence="2">
    <location>
        <position position="24"/>
    </location>
</feature>
<feature type="active site" evidence="2">
    <location>
        <position position="42"/>
    </location>
</feature>
<feature type="modified residue" description="N-acetylserine" evidence="5">
    <location>
        <position position="2"/>
    </location>
</feature>
<feature type="modified residue" description="Phosphoserine" evidence="1">
    <location>
        <position position="93"/>
    </location>
</feature>